<accession>Q5HQ16</accession>
<organism>
    <name type="scientific">Staphylococcus epidermidis (strain ATCC 35984 / DSM 28319 / BCRC 17069 / CCUG 31568 / BM 3577 / RP62A)</name>
    <dbReference type="NCBI Taxonomy" id="176279"/>
    <lineage>
        <taxon>Bacteria</taxon>
        <taxon>Bacillati</taxon>
        <taxon>Bacillota</taxon>
        <taxon>Bacilli</taxon>
        <taxon>Bacillales</taxon>
        <taxon>Staphylococcaceae</taxon>
        <taxon>Staphylococcus</taxon>
    </lineage>
</organism>
<sequence length="146" mass="16982">MGEVKHLQINYKTDELFADFREFGNKNLYMIEELKGQMIDASSDSPFYGIFVGNKLVARMALLDKGEVEETYFPNSNYYILLWKLEVLDTYQRRGYAKQLLNFAKENKKPIKAIARNNSKAFFLTQGFKDVATKNPEGHDILIWNP</sequence>
<protein>
    <recommendedName>
        <fullName>Uncharacterized N-acetyltransferase SERP0741</fullName>
        <ecNumber>2.3.1.-</ecNumber>
    </recommendedName>
</protein>
<gene>
    <name type="ordered locus">SERP0741</name>
</gene>
<feature type="chain" id="PRO_0000232489" description="Uncharacterized N-acetyltransferase SERP0741">
    <location>
        <begin position="1"/>
        <end position="146"/>
    </location>
</feature>
<feature type="domain" description="N-acetyltransferase">
    <location>
        <begin position="7"/>
        <end position="146"/>
    </location>
</feature>
<keyword id="KW-0012">Acyltransferase</keyword>
<keyword id="KW-1185">Reference proteome</keyword>
<keyword id="KW-0808">Transferase</keyword>
<dbReference type="EC" id="2.3.1.-"/>
<dbReference type="EMBL" id="CP000029">
    <property type="protein sequence ID" value="AAW54121.1"/>
    <property type="molecule type" value="Genomic_DNA"/>
</dbReference>
<dbReference type="RefSeq" id="WP_002486263.1">
    <property type="nucleotide sequence ID" value="NC_002976.3"/>
</dbReference>
<dbReference type="SMR" id="Q5HQ16"/>
<dbReference type="STRING" id="176279.SERP0741"/>
<dbReference type="KEGG" id="ser:SERP0741"/>
<dbReference type="eggNOG" id="COG0454">
    <property type="taxonomic scope" value="Bacteria"/>
</dbReference>
<dbReference type="HOGENOM" id="CLU_136634_0_0_9"/>
<dbReference type="Proteomes" id="UP000000531">
    <property type="component" value="Chromosome"/>
</dbReference>
<dbReference type="GO" id="GO:0016747">
    <property type="term" value="F:acyltransferase activity, transferring groups other than amino-acyl groups"/>
    <property type="evidence" value="ECO:0007669"/>
    <property type="project" value="UniProtKB-UniRule"/>
</dbReference>
<dbReference type="CDD" id="cd04301">
    <property type="entry name" value="NAT_SF"/>
    <property type="match status" value="1"/>
</dbReference>
<dbReference type="Gene3D" id="3.40.630.30">
    <property type="match status" value="1"/>
</dbReference>
<dbReference type="HAMAP" id="MF_00824">
    <property type="entry name" value="Acetyltransf_YlbP"/>
    <property type="match status" value="1"/>
</dbReference>
<dbReference type="InterPro" id="IPR016181">
    <property type="entry name" value="Acyl_CoA_acyltransferase"/>
</dbReference>
<dbReference type="InterPro" id="IPR000182">
    <property type="entry name" value="GNAT_dom"/>
</dbReference>
<dbReference type="InterPro" id="IPR017274">
    <property type="entry name" value="YlbP"/>
</dbReference>
<dbReference type="NCBIfam" id="NF010241">
    <property type="entry name" value="PRK13688.1"/>
    <property type="match status" value="1"/>
</dbReference>
<dbReference type="Pfam" id="PF13673">
    <property type="entry name" value="Acetyltransf_10"/>
    <property type="match status" value="1"/>
</dbReference>
<dbReference type="PIRSF" id="PIRSF037732">
    <property type="entry name" value="YlbP_prd"/>
    <property type="match status" value="1"/>
</dbReference>
<dbReference type="SUPFAM" id="SSF55729">
    <property type="entry name" value="Acyl-CoA N-acyltransferases (Nat)"/>
    <property type="match status" value="1"/>
</dbReference>
<dbReference type="PROSITE" id="PS51186">
    <property type="entry name" value="GNAT"/>
    <property type="match status" value="1"/>
</dbReference>
<proteinExistence type="inferred from homology"/>
<reference key="1">
    <citation type="journal article" date="2005" name="J. Bacteriol.">
        <title>Insights on evolution of virulence and resistance from the complete genome analysis of an early methicillin-resistant Staphylococcus aureus strain and a biofilm-producing methicillin-resistant Staphylococcus epidermidis strain.</title>
        <authorList>
            <person name="Gill S.R."/>
            <person name="Fouts D.E."/>
            <person name="Archer G.L."/>
            <person name="Mongodin E.F."/>
            <person name="DeBoy R.T."/>
            <person name="Ravel J."/>
            <person name="Paulsen I.T."/>
            <person name="Kolonay J.F."/>
            <person name="Brinkac L.M."/>
            <person name="Beanan M.J."/>
            <person name="Dodson R.J."/>
            <person name="Daugherty S.C."/>
            <person name="Madupu R."/>
            <person name="Angiuoli S.V."/>
            <person name="Durkin A.S."/>
            <person name="Haft D.H."/>
            <person name="Vamathevan J.J."/>
            <person name="Khouri H."/>
            <person name="Utterback T.R."/>
            <person name="Lee C."/>
            <person name="Dimitrov G."/>
            <person name="Jiang L."/>
            <person name="Qin H."/>
            <person name="Weidman J."/>
            <person name="Tran K."/>
            <person name="Kang K.H."/>
            <person name="Hance I.R."/>
            <person name="Nelson K.E."/>
            <person name="Fraser C.M."/>
        </authorList>
    </citation>
    <scope>NUCLEOTIDE SEQUENCE [LARGE SCALE GENOMIC DNA]</scope>
    <source>
        <strain>ATCC 35984 / DSM 28319 / BCRC 17069 / CCUG 31568 / BM 3577 / RP62A</strain>
    </source>
</reference>
<name>Y741_STAEQ</name>